<dbReference type="EMBL" id="CP001407">
    <property type="protein sequence ID" value="ACO29187.1"/>
    <property type="molecule type" value="Genomic_DNA"/>
</dbReference>
<dbReference type="RefSeq" id="WP_000135695.1">
    <property type="nucleotide sequence ID" value="NZ_CP009318.1"/>
</dbReference>
<dbReference type="SMR" id="C1EPW3"/>
<dbReference type="KEGG" id="bcx:BCA_4054"/>
<dbReference type="PATRIC" id="fig|572264.18.peg.4006"/>
<dbReference type="Proteomes" id="UP000002210">
    <property type="component" value="Chromosome"/>
</dbReference>
<dbReference type="Gene3D" id="1.10.287.750">
    <property type="entry name" value="SO2669-like"/>
    <property type="match status" value="1"/>
</dbReference>
<dbReference type="HAMAP" id="MF_01560">
    <property type="entry name" value="UPF0358"/>
    <property type="match status" value="1"/>
</dbReference>
<dbReference type="InterPro" id="IPR009983">
    <property type="entry name" value="UPF0358"/>
</dbReference>
<dbReference type="InterPro" id="IPR036270">
    <property type="entry name" value="UPF0358_sf"/>
</dbReference>
<dbReference type="NCBIfam" id="NF010187">
    <property type="entry name" value="PRK13666.1"/>
    <property type="match status" value="1"/>
</dbReference>
<dbReference type="Pfam" id="PF07408">
    <property type="entry name" value="DUF1507"/>
    <property type="match status" value="1"/>
</dbReference>
<dbReference type="SUPFAM" id="SSF140404">
    <property type="entry name" value="EF2458-like"/>
    <property type="match status" value="1"/>
</dbReference>
<reference key="1">
    <citation type="submission" date="2009-02" db="EMBL/GenBank/DDBJ databases">
        <title>Genome sequence of Bacillus cereus 03BB102.</title>
        <authorList>
            <person name="Dodson R.J."/>
            <person name="Jackson P."/>
            <person name="Munk A.C."/>
            <person name="Brettin T."/>
            <person name="Bruce D."/>
            <person name="Detter C."/>
            <person name="Tapia R."/>
            <person name="Han C."/>
            <person name="Sutton G."/>
            <person name="Sims D."/>
        </authorList>
    </citation>
    <scope>NUCLEOTIDE SEQUENCE [LARGE SCALE GENOMIC DNA]</scope>
    <source>
        <strain>03BB102</strain>
    </source>
</reference>
<evidence type="ECO:0000255" key="1">
    <source>
        <dbReference type="HAMAP-Rule" id="MF_01560"/>
    </source>
</evidence>
<organism>
    <name type="scientific">Bacillus cereus (strain 03BB102)</name>
    <dbReference type="NCBI Taxonomy" id="572264"/>
    <lineage>
        <taxon>Bacteria</taxon>
        <taxon>Bacillati</taxon>
        <taxon>Bacillota</taxon>
        <taxon>Bacilli</taxon>
        <taxon>Bacillales</taxon>
        <taxon>Bacillaceae</taxon>
        <taxon>Bacillus</taxon>
        <taxon>Bacillus cereus group</taxon>
    </lineage>
</organism>
<proteinExistence type="inferred from homology"/>
<accession>C1EPW3</accession>
<feature type="chain" id="PRO_1000185424" description="UPF0358 protein BCA_4054">
    <location>
        <begin position="1"/>
        <end position="95"/>
    </location>
</feature>
<gene>
    <name type="ordered locus">BCA_4054</name>
</gene>
<name>Y4054_BACC3</name>
<comment type="similarity">
    <text evidence="1">Belongs to the UPF0358 family.</text>
</comment>
<sequence>MASETVSNHQEKALALLQADAEKILRLIKVQMDHLTMPQCPLYEEVLDTQMFGLSREVDFAVRLGLIAEEQGKAMLGELERELSALHEAFTNKQQ</sequence>
<protein>
    <recommendedName>
        <fullName evidence="1">UPF0358 protein BCA_4054</fullName>
    </recommendedName>
</protein>